<dbReference type="EMBL" id="M85149">
    <property type="protein sequence ID" value="AAA28144.1"/>
    <property type="molecule type" value="Genomic_DNA"/>
</dbReference>
<dbReference type="EMBL" id="Z81039">
    <property type="protein sequence ID" value="CAB02774.1"/>
    <property type="molecule type" value="Genomic_DNA"/>
</dbReference>
<dbReference type="PIR" id="A45172">
    <property type="entry name" value="S27802"/>
</dbReference>
<dbReference type="PIR" id="T19450">
    <property type="entry name" value="T19450"/>
</dbReference>
<dbReference type="RefSeq" id="NP_506703.1">
    <property type="nucleotide sequence ID" value="NM_074302.4"/>
</dbReference>
<dbReference type="BioGRID" id="45005">
    <property type="interactions" value="6"/>
</dbReference>
<dbReference type="ComplexPortal" id="CPX-3888">
    <property type="entry name" value="SDC complex"/>
</dbReference>
<dbReference type="FunCoup" id="P34706">
    <property type="interactions" value="272"/>
</dbReference>
<dbReference type="STRING" id="6239.C25D7.3.1"/>
<dbReference type="iPTMnet" id="P34706"/>
<dbReference type="PaxDb" id="6239-C25D7.3"/>
<dbReference type="PeptideAtlas" id="P34706"/>
<dbReference type="EnsemblMetazoa" id="C25D7.3.1">
    <property type="protein sequence ID" value="C25D7.3.1"/>
    <property type="gene ID" value="WBGene00004747"/>
</dbReference>
<dbReference type="GeneID" id="180009"/>
<dbReference type="KEGG" id="cel:CELE_C25D7.3"/>
<dbReference type="UCSC" id="C25D7.3">
    <property type="organism name" value="c. elegans"/>
</dbReference>
<dbReference type="AGR" id="WB:WBGene00004747"/>
<dbReference type="CTD" id="180009"/>
<dbReference type="WormBase" id="C25D7.3">
    <property type="protein sequence ID" value="CE08389"/>
    <property type="gene ID" value="WBGene00004747"/>
    <property type="gene designation" value="sdc-3"/>
</dbReference>
<dbReference type="eggNOG" id="ENOG502QTZX">
    <property type="taxonomic scope" value="Eukaryota"/>
</dbReference>
<dbReference type="GeneTree" id="ENSGT00970000196626"/>
<dbReference type="HOGENOM" id="CLU_231764_0_0_1"/>
<dbReference type="InParanoid" id="P34706"/>
<dbReference type="OMA" id="ECEILME"/>
<dbReference type="OrthoDB" id="5877360at2759"/>
<dbReference type="PRO" id="PR:P34706"/>
<dbReference type="Proteomes" id="UP000001940">
    <property type="component" value="Chromosome V"/>
</dbReference>
<dbReference type="Bgee" id="WBGene00004747">
    <property type="expression patterns" value="Expressed in embryo and 3 other cell types or tissues"/>
</dbReference>
<dbReference type="GO" id="GO:0005634">
    <property type="term" value="C:nucleus"/>
    <property type="evidence" value="ECO:0000314"/>
    <property type="project" value="WormBase"/>
</dbReference>
<dbReference type="GO" id="GO:0000805">
    <property type="term" value="C:X chromosome"/>
    <property type="evidence" value="ECO:0000314"/>
    <property type="project" value="WormBase"/>
</dbReference>
<dbReference type="GO" id="GO:0043565">
    <property type="term" value="F:sequence-specific DNA binding"/>
    <property type="evidence" value="ECO:0000314"/>
    <property type="project" value="WormBase"/>
</dbReference>
<dbReference type="GO" id="GO:0008270">
    <property type="term" value="F:zinc ion binding"/>
    <property type="evidence" value="ECO:0007669"/>
    <property type="project" value="UniProtKB-KW"/>
</dbReference>
<dbReference type="GO" id="GO:0042464">
    <property type="term" value="P:dosage compensation by hypoactivation of X chromosome"/>
    <property type="evidence" value="ECO:0000303"/>
    <property type="project" value="ComplexPortal"/>
</dbReference>
<dbReference type="GO" id="GO:0000070">
    <property type="term" value="P:mitotic sister chromatid segregation"/>
    <property type="evidence" value="ECO:0000315"/>
    <property type="project" value="WormBase"/>
</dbReference>
<dbReference type="GO" id="GO:0010629">
    <property type="term" value="P:negative regulation of gene expression"/>
    <property type="evidence" value="ECO:0000303"/>
    <property type="project" value="ComplexPortal"/>
</dbReference>
<dbReference type="GO" id="GO:0000122">
    <property type="term" value="P:negative regulation of transcription by RNA polymerase II"/>
    <property type="evidence" value="ECO:0000315"/>
    <property type="project" value="WormBase"/>
</dbReference>
<dbReference type="GO" id="GO:0007530">
    <property type="term" value="P:sex determination"/>
    <property type="evidence" value="ECO:0000315"/>
    <property type="project" value="WormBase"/>
</dbReference>
<dbReference type="PROSITE" id="PS00028">
    <property type="entry name" value="ZINC_FINGER_C2H2_1"/>
    <property type="match status" value="1"/>
</dbReference>
<reference key="1">
    <citation type="journal article" date="1993" name="Cell">
        <title>Independent domains of the Sdc-3 protein control sex determination and dosage compensation in C. elegans.</title>
        <authorList>
            <person name="Klein R.D."/>
            <person name="Meyer B.J."/>
        </authorList>
    </citation>
    <scope>NUCLEOTIDE SEQUENCE [GENOMIC DNA]</scope>
    <scope>FUNCTION</scope>
    <scope>DEVELOPMENTAL STAGE</scope>
    <source>
        <strain>Bristol N2</strain>
    </source>
</reference>
<reference key="2">
    <citation type="journal article" date="1998" name="Science">
        <title>Genome sequence of the nematode C. elegans: a platform for investigating biology.</title>
        <authorList>
            <consortium name="The C. elegans sequencing consortium"/>
        </authorList>
    </citation>
    <scope>NUCLEOTIDE SEQUENCE [LARGE SCALE GENOMIC DNA]</scope>
    <source>
        <strain>Bristol N2</strain>
    </source>
</reference>
<reference key="3">
    <citation type="journal article" date="1996" name="Science">
        <title>DPY-26, a link between dosage compensation and meiotic chromosome segregation in the nematode.</title>
        <authorList>
            <person name="Lieb J.D."/>
            <person name="Capowski E.E."/>
            <person name="Meneely P."/>
            <person name="Meyer B.J."/>
        </authorList>
    </citation>
    <scope>FUNCTION</scope>
    <scope>DISRUPTION PHENOTYPE</scope>
</reference>
<reference key="4">
    <citation type="journal article" date="1996" name="Science">
        <title>Sex-specific assembly of a dosage compensation complex on the nematode X chromosome.</title>
        <authorList>
            <person name="Chuang P.-T."/>
            <person name="Lieb J.D."/>
            <person name="Meyer B.J."/>
        </authorList>
    </citation>
    <scope>FUNCTION</scope>
</reference>
<reference key="5">
    <citation type="journal article" date="1997" name="Development">
        <title>SDC-3 coordinates the assembly of a dosage compensation complex on the nematode X chromosome.</title>
        <authorList>
            <person name="Davis T.L."/>
            <person name="Meyer B.J."/>
        </authorList>
    </citation>
    <scope>FUNCTION</scope>
    <scope>SUBCELLULAR LOCATION</scope>
    <scope>TISSUE SPECIFICITY</scope>
    <scope>DEVELOPMENTAL STAGE</scope>
    <scope>MUTAGENESIS OF CYS-2080; CYS-2083; CYS-2119 AND CYS-2122</scope>
</reference>
<reference key="6">
    <citation type="journal article" date="1998" name="Cell">
        <title>MIX-1: an essential component of the C. elegans mitotic machinery executes X chromosome dosage compensation.</title>
        <authorList>
            <person name="Lieb J.D."/>
            <person name="Albrecht M.R."/>
            <person name="Chuang P.-T."/>
            <person name="Meyer B.J."/>
        </authorList>
    </citation>
    <scope>FUNCTION</scope>
    <scope>DISRUPTION PHENOTYPE</scope>
</reference>
<reference key="7">
    <citation type="journal article" date="2002" name="Genes Dev.">
        <title>A molecular link between gene-specific and chromosome-wide transcriptional repression.</title>
        <authorList>
            <person name="Chu D.S."/>
            <person name="Dawes H.E."/>
            <person name="Lieb J.D."/>
            <person name="Chan R.C."/>
            <person name="Kuo A.F."/>
            <person name="Meyer B.J."/>
        </authorList>
    </citation>
    <scope>FUNCTION</scope>
    <scope>IDENTIFICATION IN A SDC COMPLEX</scope>
    <scope>INTERACTION WITH SDC-1 AND SDC-2</scope>
    <scope>SUBCELLULAR LOCATION</scope>
</reference>
<reference key="8">
    <citation type="journal article" date="2003" name="Development">
        <title>Recruitment of C. elegans dosage compensation proteins for gene-specific versus chromosome-wide repression.</title>
        <authorList>
            <person name="Yonker S.A."/>
            <person name="Meyer B.J."/>
        </authorList>
    </citation>
    <scope>FUNCTION</scope>
    <scope>INTERACTION WITH DPY-21</scope>
    <scope>SUBCELLULAR LOCATION</scope>
    <scope>DISRUPTION PHENOTYPE</scope>
</reference>
<reference key="9">
    <citation type="journal article" date="2013" name="Proc. Natl. Acad. Sci. U.S.A.">
        <title>SUMOylation is essential for sex-specific assembly and function of the Caenorhabditis elegans dosage compensation complex on X chromosomes.</title>
        <authorList>
            <person name="Pferdehirt R.R."/>
            <person name="Meyer B.J."/>
        </authorList>
    </citation>
    <scope>SUMOYLATION</scope>
</reference>
<sequence length="2150" mass="249770">MSDEPPIVLPTEEDGPFSNCVSIAFVNDKSIPVELRIRKAIRGKVTFTQELVVAARRLYLDGELERPDLNYHVAADFYDPFMIPVPDHRNWEYNPLYPREWPRLIDRDLVQKIKMSNTYKKNQARRKRRRLLRIFHRKRGGEFLNYLWHSKENDVHYKRYMAAYQFPLPFEKCIRDVVREELKDPETSFSKPPSVVHHSKIRPATPDLLKLAKYLGKDRFCFIVTPFKFRSQFRLRYYKKSPFKRSNILEKWLKFKKVRDQGVFNIRDAAREVKKLLQRKNVYHMTDPQCEQEFWDVYRLQMQWLEEDNIEENITMLRENLSKVTDEEFNRSVYIMRPENRASIHDDVTFTTDAEINLKPIVLELFRNNMPLEDIRQVKECIDDMINLTVCQELIPQVATIETVRDYSGVEQHRLKYIRPENELEIMFQLATVLVKNENTHDQEITSPMFALLRTEQYLWSIPLRPFLRMYTDWRKTKLNFKKFRKFSPELVSKAPIDLFKVFLTTNMDKKGVATKDTDCFDYRTASEIKKLYHEEFIRVRPIIEHQRFHRCYTSVITEEPLPNPFYWVHRGQWEKVYECNWKQRVKPLAGRFSWKTKHPNICDLPRLEKDDKQEMEMLAKMREKIREYNKEKEKHPFYVSSSLPEFASTSDFVKFPISNTGIKYTAPRRNQPKVQRSLVTYTRFRLAELEDKDFSFPEEKMLEKNRLLEKLNFEERLQLDALMSKDVKYKPRMIPEKGFLQLQDEKLILKRLCEKEDEWSGKQKRRFPDLYEQATQEAERLGDPDASTSGTSNKELGLLPVWKHDDFRDLKKINVLGSKEYPISSPYLIKRLHYDIHLEIVRDKLKSWIYRTELWEKMKPVYERLKRDKEKREKEWHEMRAAQRAQKEKEEEDQRRMDMGIEHGQESLLKSITPEVEQQILLPISRENSFEEMLPAPQEAYDEDLDQDIDIHFDGAESVCTGIRLDSEDRELVDSPDQVENEEPERVEAVTENIRQEMSDAEMRDLMRKKREQYSMLFPNVPQPFQPLNRFDVTAPGAGIVPPYDEAPDFDLSAYLEEDHVRIPTLSTVEINSLLKDQDLVEEQEIVEEEETPLVVEEPDIPAAPVLSAEEKASRISREMSALRKLPDAAFNYASDRDGVVVEEVETIEEIQEIYNDKLEKMIAARLGSIAQGANIERLSEDQLLGDQGSEDISFEEIQVDLLLESGVEVQVNQSVTISRSSTSFESLLVEDPEEHPEQLPVSASEKANNQIVPEVEVEGSVVPVTNQQEENVTSEGPTLQEGSSIPSSSHIYTVDELLGTESPGPEATETPVAEESPKKKSGKTTRGRPKKVKENLKKRIQPRRGQKEEAAHEPEVVEEQEQVEPEVGPEVVHEPVPAPAAQLETEPIEQQIEEPDKVFEPIIEALPLFETSPVPAPEGNIPSRAHSSDDDVQVISSETDPNGPINLVEQVQNDKLTAYQYSTEELLGEYGELDEAGAPSPSEIVVHDEVLQDEVLQPNPKSSKKRGRRRKKTPPHIAKARKVFTSISKTEEIELAPTPTQQSRKRMANVSSEEATATRRQKRAKVEEPNDSDVSRVLTPEPEDLHETERPGHVGEEGFETPSLRTGRESTASSVKTSRSKRLFLSKNNPVPRMRIQSQAGTNASPTPARRTGVARDSVSPDGASEKLKQLPKSVQDIFEVFDVERSAERGESATVTNLEGPVKIEIEDENWMAPPAITETSRKSKKRLRAEKQQQILDDIKLELNGEPPQKRECEILMERVQVKIEEGVENADCRIVQANFNCKSVEEHETLPLKIIRVFEENEKPVHKFFMTQIIWKEINEAFMTDPEKFMLLVRILFSDRNISGQIYKISMTVTDRIKGFDDDFIKLLTQFPKKLSQEHKPLVDYNKLAHALREKASLHLNNHKITPFTFHGVISNITEMKEKIIGRCEIGMLTDGDRDVLNSTENMLLGAYMKSVLRMTAQSQVSWAHPEYIKRRLEMIYYGWRMFLGSGGFFRVALAINRKDVKPMSQQFRDFFIEYLKDVNENYAKAVELVQMDEDKLMEAMIEKAGLSSIDLLALDEDVQGQVSESHKHKCVQCSIRNQSVYFSSYSLLELHGKLHQNLHELAPEDADDCQDCYETLTSSFEVIVHRINHHHSRRCFFADD</sequence>
<organism>
    <name type="scientific">Caenorhabditis elegans</name>
    <dbReference type="NCBI Taxonomy" id="6239"/>
    <lineage>
        <taxon>Eukaryota</taxon>
        <taxon>Metazoa</taxon>
        <taxon>Ecdysozoa</taxon>
        <taxon>Nematoda</taxon>
        <taxon>Chromadorea</taxon>
        <taxon>Rhabditida</taxon>
        <taxon>Rhabditina</taxon>
        <taxon>Rhabditomorpha</taxon>
        <taxon>Rhabditoidea</taxon>
        <taxon>Rhabditidae</taxon>
        <taxon>Peloderinae</taxon>
        <taxon>Caenorhabditis</taxon>
    </lineage>
</organism>
<protein>
    <recommendedName>
        <fullName>Zinc finger protein sdc-3</fullName>
    </recommendedName>
</protein>
<evidence type="ECO:0000256" key="1">
    <source>
        <dbReference type="SAM" id="MobiDB-lite"/>
    </source>
</evidence>
<evidence type="ECO:0000269" key="2">
    <source>
    </source>
</evidence>
<evidence type="ECO:0000269" key="3">
    <source>
    </source>
</evidence>
<evidence type="ECO:0000269" key="4">
    <source>
    </source>
</evidence>
<evidence type="ECO:0000269" key="5">
    <source>
    </source>
</evidence>
<evidence type="ECO:0000269" key="6">
    <source>
    </source>
</evidence>
<evidence type="ECO:0000269" key="7">
    <source>
    </source>
</evidence>
<evidence type="ECO:0000269" key="8">
    <source>
    </source>
</evidence>
<evidence type="ECO:0000269" key="9">
    <source>
    </source>
</evidence>
<evidence type="ECO:0000305" key="10"/>
<keyword id="KW-0158">Chromosome</keyword>
<keyword id="KW-0217">Developmental protein</keyword>
<keyword id="KW-0238">DNA-binding</keyword>
<keyword id="KW-0479">Metal-binding</keyword>
<keyword id="KW-0539">Nucleus</keyword>
<keyword id="KW-1185">Reference proteome</keyword>
<keyword id="KW-0677">Repeat</keyword>
<keyword id="KW-0832">Ubl conjugation</keyword>
<keyword id="KW-0862">Zinc</keyword>
<keyword id="KW-0863">Zinc-finger</keyword>
<comment type="function">
    <text evidence="2 3 5 6 7 8 9">Component of the SDC complex that functions in sex determination and in X chromosome dosage compensation specifically in hermaphrodite (XX) animals (PubMed:11937488, PubMed:8431944). Plays a central role in the recruitment of the condensin I-like dosage compensation complex to the male sex-determining autosomal gene her-1, thereby contributing to its repression and initiating hermaphrodite sexual development (PubMed:11937488, PubMed:14660541). Involved in the recruitment and assembly of the dosage compensation complex and the dosage compensation protein dpy-21 onto the X chromosomes in hermaphrodites, which leads to a reduction of X-linked gene transcription and an equalization of X-linked gene expression between the sexes (PubMed:14660541, PubMed:8939869, PubMed:8939870, PubMed:9056777, PubMed:9458050).</text>
</comment>
<comment type="subunit">
    <text evidence="2 3">Component of the SDC complex, which consists of sdc-1, sdc-2 and sdc-3 (PubMed:11937488). Within the complex, interacts with sdc-1 and sdc-2 (PubMed:11937488). Interacts with dpy-21 (PubMed:14660541).</text>
</comment>
<comment type="subcellular location">
    <subcellularLocation>
        <location evidence="2 3 8">Chromosome</location>
    </subcellularLocation>
    <subcellularLocation>
        <location evidence="8">Nucleus</location>
    </subcellularLocation>
    <text evidence="2 3 8">Localizes specifically to X chromosomes in hermaphrodite (XX) embryos after the 40-cell stage.</text>
</comment>
<comment type="tissue specificity">
    <text evidence="8">Expressed in somatic and in germline tissues in hermaphrodites (XX). In males (XO), only present in embryos younger than the 100-cell stage (at protein level).</text>
</comment>
<comment type="developmental stage">
    <text evidence="5 8">Expressed in embryonic and early larval stages and in adult animals.</text>
</comment>
<comment type="PTM">
    <text evidence="4">Sumoylated. Sumoylation is important for assembly of the dosage compensation complex and its robust binding to the X chromosome.</text>
</comment>
<comment type="disruption phenotype">
    <text evidence="3 6 9">Disrupts the X-chromosome specific localization of dpy-26, mix-1 and dpy-21.</text>
</comment>
<gene>
    <name type="primary">sdc-3</name>
    <name type="ORF">C25D7.3</name>
</gene>
<name>SDC3_CAEEL</name>
<accession>P34706</accession>
<accession>O17596</accession>
<feature type="chain" id="PRO_0000046891" description="Zinc finger protein sdc-3">
    <location>
        <begin position="1"/>
        <end position="2150"/>
    </location>
</feature>
<feature type="zinc finger region" description="C2H2-type 1">
    <location>
        <begin position="2078"/>
        <end position="2105"/>
    </location>
</feature>
<feature type="zinc finger region" description="C2H2-type 2">
    <location>
        <begin position="2117"/>
        <end position="2141"/>
    </location>
</feature>
<feature type="region of interest" description="Dosage compensation domain 1" evidence="5">
    <location>
        <begin position="443"/>
        <end position="987"/>
    </location>
</feature>
<feature type="region of interest" description="Disordered" evidence="1">
    <location>
        <begin position="874"/>
        <end position="894"/>
    </location>
</feature>
<feature type="region of interest" description="Disordered" evidence="1">
    <location>
        <begin position="1261"/>
        <end position="1373"/>
    </location>
</feature>
<feature type="region of interest" description="Disordered" evidence="1">
    <location>
        <begin position="1411"/>
        <end position="1448"/>
    </location>
</feature>
<feature type="region of interest" description="Disordered" evidence="1">
    <location>
        <begin position="1491"/>
        <end position="1670"/>
    </location>
</feature>
<feature type="region of interest" description="Sex determination domain" evidence="5">
    <location>
        <begin position="1508"/>
        <end position="1516"/>
    </location>
</feature>
<feature type="region of interest" description="Dosage compensation domain 2" evidence="5">
    <location>
        <begin position="2080"/>
        <end position="2105"/>
    </location>
</feature>
<feature type="compositionally biased region" description="Polar residues" evidence="1">
    <location>
        <begin position="1267"/>
        <end position="1293"/>
    </location>
</feature>
<feature type="compositionally biased region" description="Basic residues" evidence="1">
    <location>
        <begin position="1321"/>
        <end position="1333"/>
    </location>
</feature>
<feature type="compositionally biased region" description="Basic and acidic residues" evidence="1">
    <location>
        <begin position="1347"/>
        <end position="1357"/>
    </location>
</feature>
<feature type="compositionally biased region" description="Basic residues" evidence="1">
    <location>
        <begin position="1504"/>
        <end position="1524"/>
    </location>
</feature>
<feature type="compositionally biased region" description="Basic and acidic residues" evidence="1">
    <location>
        <begin position="1585"/>
        <end position="1598"/>
    </location>
</feature>
<feature type="compositionally biased region" description="Polar residues" evidence="1">
    <location>
        <begin position="1638"/>
        <end position="1648"/>
    </location>
</feature>
<feature type="mutagenesis site" description="Loss of X chromosome association and failure in dosage compensation complex assembly; when associated with S-2083; S-2119 and S-2122." evidence="8">
    <original>C</original>
    <variation>S</variation>
    <location>
        <position position="2080"/>
    </location>
</feature>
<feature type="mutagenesis site" description="Loss of X chromosome association and failure in dosage compensation complex assembly; when associated with S-2080; S-2119 and S-2122." evidence="8">
    <original>C</original>
    <variation>S</variation>
    <location>
        <position position="2083"/>
    </location>
</feature>
<feature type="mutagenesis site" description="Loss of X chromosome association and failure in dosage compensation complex assembly; when associated with S-2080; S-2083 and S-2122." evidence="8">
    <original>C</original>
    <variation>S</variation>
    <location>
        <position position="2119"/>
    </location>
</feature>
<feature type="mutagenesis site" description="Loss of X chromosome association and failure in dosage compensation complex assembly; when associated with S-2080; S-2083 and S-2119." evidence="8">
    <original>C</original>
    <variation>S</variation>
    <location>
        <position position="2122"/>
    </location>
</feature>
<feature type="sequence conflict" description="In Ref. 1; AAA28144." evidence="10" ref="1">
    <original>A</original>
    <variation>R</variation>
    <location>
        <position position="451"/>
    </location>
</feature>
<feature type="sequence conflict" description="In Ref. 1; AAA28144." evidence="10" ref="1">
    <original>S</original>
    <variation>C</variation>
    <location>
        <position position="527"/>
    </location>
</feature>
<feature type="sequence conflict" description="In Ref. 1; AAA28144." evidence="10" ref="1">
    <original>A</original>
    <variation>R</variation>
    <location>
        <position position="937"/>
    </location>
</feature>
<proteinExistence type="evidence at protein level"/>